<name>MALK_SALCH</name>
<gene>
    <name evidence="1" type="primary">malK</name>
    <name type="ordered locus">SCH_4109</name>
</gene>
<comment type="function">
    <text evidence="1">Part of the ABC transporter complex MalEFGK involved in maltose/maltodextrin import. Responsible for energy coupling to the transport system.</text>
</comment>
<comment type="catalytic activity">
    <reaction evidence="1">
        <text>D-maltose(out) + ATP + H2O = D-maltose(in) + ADP + phosphate + H(+)</text>
        <dbReference type="Rhea" id="RHEA:22132"/>
        <dbReference type="ChEBI" id="CHEBI:15377"/>
        <dbReference type="ChEBI" id="CHEBI:15378"/>
        <dbReference type="ChEBI" id="CHEBI:17306"/>
        <dbReference type="ChEBI" id="CHEBI:30616"/>
        <dbReference type="ChEBI" id="CHEBI:43474"/>
        <dbReference type="ChEBI" id="CHEBI:456216"/>
        <dbReference type="EC" id="7.5.2.1"/>
    </reaction>
</comment>
<comment type="subunit">
    <text evidence="1">The complex is composed of two ATP-binding proteins (MalK), two transmembrane proteins (MalG and MalK) and a solute-binding protein (MalE).</text>
</comment>
<comment type="subcellular location">
    <subcellularLocation>
        <location evidence="1">Cell inner membrane</location>
        <topology evidence="1">Peripheral membrane protein</topology>
    </subcellularLocation>
</comment>
<comment type="similarity">
    <text evidence="1">Belongs to the ABC transporter superfamily. Maltooligosaccharide importer (TC 3.A.1.1.1) family.</text>
</comment>
<accession>Q57GZ7</accession>
<keyword id="KW-0067">ATP-binding</keyword>
<keyword id="KW-0997">Cell inner membrane</keyword>
<keyword id="KW-1003">Cell membrane</keyword>
<keyword id="KW-0472">Membrane</keyword>
<keyword id="KW-0547">Nucleotide-binding</keyword>
<keyword id="KW-0762">Sugar transport</keyword>
<keyword id="KW-1278">Translocase</keyword>
<keyword id="KW-0813">Transport</keyword>
<sequence>MASVQLRNVTKAWGDVVVSKDINLDIHDGEFVVFVGPSGCGKSTLLRMIAGLETITSGDLFIGETRMNDIPPAERGVGMVFQSYALYPHLSVAENMSFGLKLAGAKKEVMNQRVNQVAEVLQLAHLLERKPKALSGGQRQRVAIGRTLVAEPRVFLLDEPLSNLDAALRVQMRIEISRLHKRLGRTMIYVTHDQVEAMTLADKIVVLDAGRVAQVGKPLELYHYPADRFVAGFIGSPKMNFLPVKVTATAIEQVQVELPNRQQIWLPVESRGVQVGANMSLGIRPEHLLPSDIADVTLEGEVQVVEQLGHETQIHIQIPAIRQNLVYRQNDVVLVEEGATFAIGLPPERCHLFREDGSACRRLHQEPGV</sequence>
<evidence type="ECO:0000255" key="1">
    <source>
        <dbReference type="HAMAP-Rule" id="MF_01709"/>
    </source>
</evidence>
<protein>
    <recommendedName>
        <fullName evidence="1">Maltose/maltodextrin import ATP-binding protein MalK</fullName>
        <ecNumber evidence="1">7.5.2.1</ecNumber>
    </recommendedName>
</protein>
<organism>
    <name type="scientific">Salmonella choleraesuis (strain SC-B67)</name>
    <dbReference type="NCBI Taxonomy" id="321314"/>
    <lineage>
        <taxon>Bacteria</taxon>
        <taxon>Pseudomonadati</taxon>
        <taxon>Pseudomonadota</taxon>
        <taxon>Gammaproteobacteria</taxon>
        <taxon>Enterobacterales</taxon>
        <taxon>Enterobacteriaceae</taxon>
        <taxon>Salmonella</taxon>
    </lineage>
</organism>
<dbReference type="EC" id="7.5.2.1" evidence="1"/>
<dbReference type="EMBL" id="AE017220">
    <property type="protein sequence ID" value="AAX68015.1"/>
    <property type="molecule type" value="Genomic_DNA"/>
</dbReference>
<dbReference type="RefSeq" id="WP_000179176.1">
    <property type="nucleotide sequence ID" value="NC_006905.1"/>
</dbReference>
<dbReference type="SMR" id="Q57GZ7"/>
<dbReference type="KEGG" id="sec:SCH_4109"/>
<dbReference type="HOGENOM" id="CLU_000604_1_1_6"/>
<dbReference type="Proteomes" id="UP000000538">
    <property type="component" value="Chromosome"/>
</dbReference>
<dbReference type="GO" id="GO:0055052">
    <property type="term" value="C:ATP-binding cassette (ABC) transporter complex, substrate-binding subunit-containing"/>
    <property type="evidence" value="ECO:0007669"/>
    <property type="project" value="TreeGrafter"/>
</dbReference>
<dbReference type="GO" id="GO:1990060">
    <property type="term" value="C:maltose transport complex"/>
    <property type="evidence" value="ECO:0007669"/>
    <property type="project" value="TreeGrafter"/>
</dbReference>
<dbReference type="GO" id="GO:0015423">
    <property type="term" value="F:ABC-type maltose transporter activity"/>
    <property type="evidence" value="ECO:0007669"/>
    <property type="project" value="UniProtKB-EC"/>
</dbReference>
<dbReference type="GO" id="GO:0005524">
    <property type="term" value="F:ATP binding"/>
    <property type="evidence" value="ECO:0007669"/>
    <property type="project" value="UniProtKB-KW"/>
</dbReference>
<dbReference type="GO" id="GO:0016887">
    <property type="term" value="F:ATP hydrolysis activity"/>
    <property type="evidence" value="ECO:0007669"/>
    <property type="project" value="InterPro"/>
</dbReference>
<dbReference type="CDD" id="cd03301">
    <property type="entry name" value="ABC_MalK_N"/>
    <property type="match status" value="1"/>
</dbReference>
<dbReference type="FunFam" id="3.40.50.300:FF:000042">
    <property type="entry name" value="Maltose/maltodextrin ABC transporter, ATP-binding protein"/>
    <property type="match status" value="1"/>
</dbReference>
<dbReference type="FunFam" id="2.40.50.100:FF:000014">
    <property type="entry name" value="Maltose/maltodextrin import ATP-binding protein MalK"/>
    <property type="match status" value="1"/>
</dbReference>
<dbReference type="FunFam" id="2.40.50.140:FF:000070">
    <property type="entry name" value="Maltose/maltodextrin import ATP-binding protein MalK"/>
    <property type="match status" value="1"/>
</dbReference>
<dbReference type="Gene3D" id="2.40.50.100">
    <property type="match status" value="1"/>
</dbReference>
<dbReference type="Gene3D" id="2.40.50.140">
    <property type="entry name" value="Nucleic acid-binding proteins"/>
    <property type="match status" value="1"/>
</dbReference>
<dbReference type="Gene3D" id="3.40.50.300">
    <property type="entry name" value="P-loop containing nucleotide triphosphate hydrolases"/>
    <property type="match status" value="1"/>
</dbReference>
<dbReference type="InterPro" id="IPR003593">
    <property type="entry name" value="AAA+_ATPase"/>
</dbReference>
<dbReference type="InterPro" id="IPR003439">
    <property type="entry name" value="ABC_transporter-like_ATP-bd"/>
</dbReference>
<dbReference type="InterPro" id="IPR017871">
    <property type="entry name" value="ABC_transporter-like_CS"/>
</dbReference>
<dbReference type="InterPro" id="IPR015855">
    <property type="entry name" value="ABC_transpr_MalK-like"/>
</dbReference>
<dbReference type="InterPro" id="IPR047641">
    <property type="entry name" value="ABC_transpr_MalK/UgpC-like"/>
</dbReference>
<dbReference type="InterPro" id="IPR008995">
    <property type="entry name" value="Mo/tungstate-bd_C_term_dom"/>
</dbReference>
<dbReference type="InterPro" id="IPR012340">
    <property type="entry name" value="NA-bd_OB-fold"/>
</dbReference>
<dbReference type="InterPro" id="IPR027417">
    <property type="entry name" value="P-loop_NTPase"/>
</dbReference>
<dbReference type="InterPro" id="IPR013611">
    <property type="entry name" value="Transp-assoc_OB_typ2"/>
</dbReference>
<dbReference type="NCBIfam" id="NF008233">
    <property type="entry name" value="PRK11000.1"/>
    <property type="match status" value="1"/>
</dbReference>
<dbReference type="NCBIfam" id="NF008653">
    <property type="entry name" value="PRK11650.1"/>
    <property type="match status" value="1"/>
</dbReference>
<dbReference type="PANTHER" id="PTHR43875">
    <property type="entry name" value="MALTODEXTRIN IMPORT ATP-BINDING PROTEIN MSMX"/>
    <property type="match status" value="1"/>
</dbReference>
<dbReference type="PANTHER" id="PTHR43875:SF3">
    <property type="entry name" value="MALTOSE_MALTODEXTRIN IMPORT ATP-BINDING PROTEIN MALK"/>
    <property type="match status" value="1"/>
</dbReference>
<dbReference type="Pfam" id="PF00005">
    <property type="entry name" value="ABC_tran"/>
    <property type="match status" value="1"/>
</dbReference>
<dbReference type="Pfam" id="PF08402">
    <property type="entry name" value="TOBE_2"/>
    <property type="match status" value="1"/>
</dbReference>
<dbReference type="SMART" id="SM00382">
    <property type="entry name" value="AAA"/>
    <property type="match status" value="1"/>
</dbReference>
<dbReference type="SUPFAM" id="SSF50331">
    <property type="entry name" value="MOP-like"/>
    <property type="match status" value="1"/>
</dbReference>
<dbReference type="SUPFAM" id="SSF52540">
    <property type="entry name" value="P-loop containing nucleoside triphosphate hydrolases"/>
    <property type="match status" value="1"/>
</dbReference>
<dbReference type="PROSITE" id="PS00211">
    <property type="entry name" value="ABC_TRANSPORTER_1"/>
    <property type="match status" value="1"/>
</dbReference>
<dbReference type="PROSITE" id="PS50893">
    <property type="entry name" value="ABC_TRANSPORTER_2"/>
    <property type="match status" value="1"/>
</dbReference>
<dbReference type="PROSITE" id="PS51245">
    <property type="entry name" value="MALK"/>
    <property type="match status" value="1"/>
</dbReference>
<reference key="1">
    <citation type="journal article" date="2005" name="Nucleic Acids Res.">
        <title>The genome sequence of Salmonella enterica serovar Choleraesuis, a highly invasive and resistant zoonotic pathogen.</title>
        <authorList>
            <person name="Chiu C.-H."/>
            <person name="Tang P."/>
            <person name="Chu C."/>
            <person name="Hu S."/>
            <person name="Bao Q."/>
            <person name="Yu J."/>
            <person name="Chou Y.-Y."/>
            <person name="Wang H.-S."/>
            <person name="Lee Y.-S."/>
        </authorList>
    </citation>
    <scope>NUCLEOTIDE SEQUENCE [LARGE SCALE GENOMIC DNA]</scope>
    <source>
        <strain>SC-B67</strain>
    </source>
</reference>
<proteinExistence type="inferred from homology"/>
<feature type="chain" id="PRO_0000273997" description="Maltose/maltodextrin import ATP-binding protein MalK">
    <location>
        <begin position="1"/>
        <end position="369"/>
    </location>
</feature>
<feature type="domain" description="ABC transporter" evidence="1">
    <location>
        <begin position="4"/>
        <end position="234"/>
    </location>
</feature>
<feature type="binding site" evidence="1">
    <location>
        <begin position="36"/>
        <end position="43"/>
    </location>
    <ligand>
        <name>ATP</name>
        <dbReference type="ChEBI" id="CHEBI:30616"/>
    </ligand>
</feature>